<proteinExistence type="inferred from homology"/>
<organism>
    <name type="scientific">Saccharomyces cerevisiae (strain FostersB)</name>
    <name type="common">Baker's yeast</name>
    <dbReference type="NCBI Taxonomy" id="764102"/>
    <lineage>
        <taxon>Eukaryota</taxon>
        <taxon>Fungi</taxon>
        <taxon>Dikarya</taxon>
        <taxon>Ascomycota</taxon>
        <taxon>Saccharomycotina</taxon>
        <taxon>Saccharomycetes</taxon>
        <taxon>Saccharomycetales</taxon>
        <taxon>Saccharomycetaceae</taxon>
        <taxon>Saccharomyces</taxon>
    </lineage>
</organism>
<protein>
    <recommendedName>
        <fullName>Spindle pole component BBP1</fullName>
    </recommendedName>
    <alternativeName>
        <fullName>BFR1-binding protein 1</fullName>
    </alternativeName>
</protein>
<keyword id="KW-0175">Coiled coil</keyword>
<keyword id="KW-0963">Cytoplasm</keyword>
<keyword id="KW-0206">Cytoskeleton</keyword>
<keyword id="KW-0597">Phosphoprotein</keyword>
<accession>E7QA20</accession>
<name>BBP1_YEASB</name>
<reference key="1">
    <citation type="journal article" date="2011" name="PLoS Genet.">
        <title>Whole-genome comparison reveals novel genetic elements that characterize the genome of industrial strains of Saccharomyces cerevisiae.</title>
        <authorList>
            <person name="Borneman A.R."/>
            <person name="Desany B.A."/>
            <person name="Riches D."/>
            <person name="Affourtit J.P."/>
            <person name="Forgan A.H."/>
            <person name="Pretorius I.S."/>
            <person name="Egholm M."/>
            <person name="Chambers P.J."/>
        </authorList>
    </citation>
    <scope>NUCLEOTIDE SEQUENCE [LARGE SCALE GENOMIC DNA]</scope>
    <source>
        <strain>FostersB</strain>
    </source>
</reference>
<dbReference type="EMBL" id="AEHH01000075">
    <property type="protein sequence ID" value="EGA56437.1"/>
    <property type="molecule type" value="Genomic_DNA"/>
</dbReference>
<dbReference type="SMR" id="E7QA20"/>
<dbReference type="HOGENOM" id="CLU_711875_0_0_1"/>
<dbReference type="OrthoDB" id="4042536at2759"/>
<dbReference type="GO" id="GO:0005737">
    <property type="term" value="C:cytoplasm"/>
    <property type="evidence" value="ECO:0007669"/>
    <property type="project" value="UniProtKB-KW"/>
</dbReference>
<dbReference type="GO" id="GO:0005816">
    <property type="term" value="C:spindle pole body"/>
    <property type="evidence" value="ECO:0007669"/>
    <property type="project" value="UniProtKB-SubCell"/>
</dbReference>
<dbReference type="InterPro" id="IPR029330">
    <property type="entry name" value="Bbp1_C"/>
</dbReference>
<dbReference type="InterPro" id="IPR029328">
    <property type="entry name" value="Bbp1_N"/>
</dbReference>
<dbReference type="Pfam" id="PF15272">
    <property type="entry name" value="BBP1_C"/>
    <property type="match status" value="1"/>
</dbReference>
<dbReference type="Pfam" id="PF15271">
    <property type="entry name" value="BBP1_N"/>
    <property type="match status" value="1"/>
</dbReference>
<feature type="chain" id="PRO_0000409180" description="Spindle pole component BBP1">
    <location>
        <begin position="1"/>
        <end position="419"/>
    </location>
</feature>
<feature type="region of interest" description="Disordered" evidence="4">
    <location>
        <begin position="34"/>
        <end position="76"/>
    </location>
</feature>
<feature type="coiled-coil region" evidence="3">
    <location>
        <begin position="229"/>
        <end position="355"/>
    </location>
</feature>
<feature type="compositionally biased region" description="Basic and acidic residues" evidence="4">
    <location>
        <begin position="34"/>
        <end position="48"/>
    </location>
</feature>
<feature type="compositionally biased region" description="Low complexity" evidence="4">
    <location>
        <begin position="64"/>
        <end position="75"/>
    </location>
</feature>
<feature type="modified residue" description="Phosphoserine" evidence="2">
    <location>
        <position position="29"/>
    </location>
</feature>
<feature type="modified residue" description="Phosphoserine" evidence="2">
    <location>
        <position position="73"/>
    </location>
</feature>
<feature type="modified residue" description="Phosphoserine" evidence="2">
    <location>
        <position position="115"/>
    </location>
</feature>
<evidence type="ECO:0000250" key="1"/>
<evidence type="ECO:0000250" key="2">
    <source>
        <dbReference type="UniProtKB" id="Q12365"/>
    </source>
</evidence>
<evidence type="ECO:0000255" key="3"/>
<evidence type="ECO:0000256" key="4">
    <source>
        <dbReference type="SAM" id="MobiDB-lite"/>
    </source>
</evidence>
<evidence type="ECO:0000305" key="5"/>
<comment type="function">
    <text evidence="1">Component of the spindle pole body (SPB) required for insertion of the nascent SPB into the nuclear envelope and for the proper execution of spindle pole body (SPB) duplication. Connects the central plaque of the SPB with the half-bridge. Required for proper localization of CDC5 at the SPB and for proper M-phase progression (By similarity).</text>
</comment>
<comment type="subunit">
    <text evidence="1">Homodimer. Interacts with KAR1, MPS2 and SPC29.</text>
</comment>
<comment type="subcellular location">
    <subcellularLocation>
        <location evidence="1">Cytoplasm</location>
        <location evidence="1">Cytoskeleton</location>
        <location evidence="1">Microtubule organizing center</location>
        <location evidence="1">Spindle pole body</location>
    </subcellularLocation>
    <text evidence="1">Associates with the periphary of the central plaque.</text>
</comment>
<comment type="similarity">
    <text evidence="5">Belongs to the BBP1 family.</text>
</comment>
<sequence>MNQEDNTGGGGIFGLFKWTKDALFGTDISPSMKYKDQEERRDRSRYAQDDTNFSMKFGNDSNRRSTNLSRSNSWSGLDSTLHRKYELLPEYNENGFNSIVNGDHHSKERIRSLRSPAPIVPREPLRNEPTDTFGHRLHTKRRTINELSNSQIPFIPPQEDDPLLSKLFNKDGVNEVRRSPYKLSVKDIPGKFPSPLTKRDEIDNYYVRDEDACHKNREYKKAYFDLFAQMDLNSRDLEDLCEDVREQREQFHRNEQTYKQAYEEMRAELVNELKKSKTLFENYYSLGQKYKSLKKVLDQTISHEAELATSRERLYQEVDLKNFEIQTLKQRLSDLELKYTNLQIEKDMQRDNYESEIHDLLLQLSLRNNERKDTSAGSNIFSTGQYDRTPFHNGNDSYDSNSHSWDTDYLKNIDGFIER</sequence>
<gene>
    <name type="primary">BBP1</name>
    <name type="ORF">FOSTERSB_4670</name>
</gene>